<dbReference type="EMBL" id="BC075182">
    <property type="protein sequence ID" value="AAH75182.1"/>
    <property type="molecule type" value="mRNA"/>
</dbReference>
<dbReference type="RefSeq" id="NP_001086373.1">
    <property type="nucleotide sequence ID" value="NM_001092904.1"/>
</dbReference>
<dbReference type="SMR" id="Q6DJJ6"/>
<dbReference type="DNASU" id="444802"/>
<dbReference type="GeneID" id="444802"/>
<dbReference type="KEGG" id="xla:444802"/>
<dbReference type="AGR" id="Xenbase:XB-GENE-17330332"/>
<dbReference type="CTD" id="444802"/>
<dbReference type="Xenbase" id="XB-GENE-17330332">
    <property type="gene designation" value="rhpn2.S"/>
</dbReference>
<dbReference type="OrthoDB" id="64867at2759"/>
<dbReference type="Proteomes" id="UP000186698">
    <property type="component" value="Chromosome 4S"/>
</dbReference>
<dbReference type="Bgee" id="444802">
    <property type="expression patterns" value="Expressed in stomach and 15 other cell types or tissues"/>
</dbReference>
<dbReference type="GO" id="GO:0048471">
    <property type="term" value="C:perinuclear region of cytoplasm"/>
    <property type="evidence" value="ECO:0007669"/>
    <property type="project" value="UniProtKB-SubCell"/>
</dbReference>
<dbReference type="GO" id="GO:0051497">
    <property type="term" value="P:negative regulation of stress fiber assembly"/>
    <property type="evidence" value="ECO:0000318"/>
    <property type="project" value="GO_Central"/>
</dbReference>
<dbReference type="GO" id="GO:0007165">
    <property type="term" value="P:signal transduction"/>
    <property type="evidence" value="ECO:0007669"/>
    <property type="project" value="InterPro"/>
</dbReference>
<dbReference type="CDD" id="cd09249">
    <property type="entry name" value="BRO1_Rhophilin_2"/>
    <property type="match status" value="1"/>
</dbReference>
<dbReference type="CDD" id="cd06712">
    <property type="entry name" value="PDZ_rhophilin-like"/>
    <property type="match status" value="1"/>
</dbReference>
<dbReference type="FunFam" id="1.25.40.280:FF:000003">
    <property type="entry name" value="RHPN1 isoform 1"/>
    <property type="match status" value="1"/>
</dbReference>
<dbReference type="FunFam" id="2.30.42.10:FF:000160">
    <property type="entry name" value="RHPN1 isoform 1"/>
    <property type="match status" value="1"/>
</dbReference>
<dbReference type="Gene3D" id="2.30.42.10">
    <property type="match status" value="1"/>
</dbReference>
<dbReference type="Gene3D" id="1.25.40.280">
    <property type="entry name" value="alix/aip1 like domains"/>
    <property type="match status" value="1"/>
</dbReference>
<dbReference type="Gene3D" id="1.10.287.160">
    <property type="entry name" value="HR1 repeat"/>
    <property type="match status" value="1"/>
</dbReference>
<dbReference type="InterPro" id="IPR004328">
    <property type="entry name" value="BRO1_dom"/>
</dbReference>
<dbReference type="InterPro" id="IPR038499">
    <property type="entry name" value="BRO1_sf"/>
</dbReference>
<dbReference type="InterPro" id="IPR011072">
    <property type="entry name" value="HR1_rho-bd"/>
</dbReference>
<dbReference type="InterPro" id="IPR036274">
    <property type="entry name" value="HR1_rpt_sf"/>
</dbReference>
<dbReference type="InterPro" id="IPR001478">
    <property type="entry name" value="PDZ"/>
</dbReference>
<dbReference type="InterPro" id="IPR036034">
    <property type="entry name" value="PDZ_sf"/>
</dbReference>
<dbReference type="InterPro" id="IPR047138">
    <property type="entry name" value="RHPN1_2"/>
</dbReference>
<dbReference type="InterPro" id="IPR047902">
    <property type="entry name" value="RHPN2_BRO1"/>
</dbReference>
<dbReference type="PANTHER" id="PTHR23031">
    <property type="entry name" value="RHOPHILIN"/>
    <property type="match status" value="1"/>
</dbReference>
<dbReference type="PANTHER" id="PTHR23031:SF5">
    <property type="entry name" value="RHOPHILIN-2-RELATED"/>
    <property type="match status" value="1"/>
</dbReference>
<dbReference type="Pfam" id="PF03097">
    <property type="entry name" value="BRO1"/>
    <property type="match status" value="1"/>
</dbReference>
<dbReference type="Pfam" id="PF02185">
    <property type="entry name" value="HR1"/>
    <property type="match status" value="1"/>
</dbReference>
<dbReference type="Pfam" id="PF00595">
    <property type="entry name" value="PDZ"/>
    <property type="match status" value="1"/>
</dbReference>
<dbReference type="SMART" id="SM01041">
    <property type="entry name" value="BRO1"/>
    <property type="match status" value="1"/>
</dbReference>
<dbReference type="SMART" id="SM00742">
    <property type="entry name" value="Hr1"/>
    <property type="match status" value="1"/>
</dbReference>
<dbReference type="SMART" id="SM00228">
    <property type="entry name" value="PDZ"/>
    <property type="match status" value="1"/>
</dbReference>
<dbReference type="SUPFAM" id="SSF46585">
    <property type="entry name" value="HR1 repeat"/>
    <property type="match status" value="1"/>
</dbReference>
<dbReference type="SUPFAM" id="SSF50156">
    <property type="entry name" value="PDZ domain-like"/>
    <property type="match status" value="1"/>
</dbReference>
<dbReference type="PROSITE" id="PS51180">
    <property type="entry name" value="BRO1"/>
    <property type="match status" value="1"/>
</dbReference>
<dbReference type="PROSITE" id="PS50106">
    <property type="entry name" value="PDZ"/>
    <property type="match status" value="1"/>
</dbReference>
<dbReference type="PROSITE" id="PS51860">
    <property type="entry name" value="REM_1"/>
    <property type="match status" value="1"/>
</dbReference>
<sequence>MTDALLPGSLNGKRLSEQNYFRKGKSIAQTGRSKLQNQRASLNQQILKAMRMRVGAENLLRATSNNKIREQVLLELSFVNSNLQRLKEELERLNISVEVYQHTEQDSNIPLIPLGLKETKDVDFTTAFKDFISEHYSEDASEYENELADLMDLRQACRTPSRDEAGVELLVSYFQQLGYLENRFFPPSRNLGILFTWYDSFTGVPVSQPNISLEKASILFNIAALYTQIGTRCNRQTKIGLEEAVTAFQKATGVLNYLKETFTHTPSYDMSPAMLGVLIKMLLAEAHECYFEKMILSGIQNEFCTLLKAAQEAAKVGEVHMQVYTLMNQAPIKENVPYSWSVMVQVKAEHYKALANYFVAIILIDYQLSLSDDEDKQEKAISQLYDSMPEGLTAQTILKDQQQRTLLGKAHLSKAIRSHEEAIRFSTLCSTLRQIDVLQKILSAFHQRSQLKFSQHQKPDDFLDLLSAPDIVSKTEYQAKTISPQLSKDKVTDIFQRLGPLSVFSVKQRWSAPRKICITKEDGDFGFVLRGDCPVQVISLDPLCPAATEGLKEGDYIVSVAGKDCKWCSTSQVMDMLQATGKQSIEIQVISIQDQTYSMPTKSATYYAGMQKTYSLVCLTMDNVKHTKTQKATKKLSFLSWGFRNRQKAASTLCLPSEVKGKPKTDNLFSFPDNSLCSESVLY</sequence>
<reference key="1">
    <citation type="submission" date="2004-06" db="EMBL/GenBank/DDBJ databases">
        <authorList>
            <consortium name="NIH - Xenopus Gene Collection (XGC) project"/>
        </authorList>
    </citation>
    <scope>NUCLEOTIDE SEQUENCE [LARGE SCALE MRNA]</scope>
    <source>
        <tissue>Kidney</tissue>
    </source>
</reference>
<feature type="chain" id="PRO_0000340663" description="Rhophilin-2-A">
    <location>
        <begin position="1"/>
        <end position="683"/>
    </location>
</feature>
<feature type="domain" description="REM-1" evidence="4">
    <location>
        <begin position="25"/>
        <end position="99"/>
    </location>
</feature>
<feature type="domain" description="BRO1" evidence="3">
    <location>
        <begin position="110"/>
        <end position="501"/>
    </location>
</feature>
<feature type="domain" description="PDZ" evidence="2">
    <location>
        <begin position="515"/>
        <end position="592"/>
    </location>
</feature>
<keyword id="KW-0175">Coiled coil</keyword>
<keyword id="KW-0963">Cytoplasm</keyword>
<keyword id="KW-1185">Reference proteome</keyword>
<protein>
    <recommendedName>
        <fullName>Rhophilin-2-A</fullName>
    </recommendedName>
    <alternativeName>
        <fullName>GTP-Rho-binding protein 2-A</fullName>
    </alternativeName>
</protein>
<organism>
    <name type="scientific">Xenopus laevis</name>
    <name type="common">African clawed frog</name>
    <dbReference type="NCBI Taxonomy" id="8355"/>
    <lineage>
        <taxon>Eukaryota</taxon>
        <taxon>Metazoa</taxon>
        <taxon>Chordata</taxon>
        <taxon>Craniata</taxon>
        <taxon>Vertebrata</taxon>
        <taxon>Euteleostomi</taxon>
        <taxon>Amphibia</taxon>
        <taxon>Batrachia</taxon>
        <taxon>Anura</taxon>
        <taxon>Pipoidea</taxon>
        <taxon>Pipidae</taxon>
        <taxon>Xenopodinae</taxon>
        <taxon>Xenopus</taxon>
        <taxon>Xenopus</taxon>
    </lineage>
</organism>
<name>RHN2A_XENLA</name>
<accession>Q6DJJ6</accession>
<evidence type="ECO:0000250" key="1"/>
<evidence type="ECO:0000255" key="2">
    <source>
        <dbReference type="PROSITE-ProRule" id="PRU00143"/>
    </source>
</evidence>
<evidence type="ECO:0000255" key="3">
    <source>
        <dbReference type="PROSITE-ProRule" id="PRU00526"/>
    </source>
</evidence>
<evidence type="ECO:0000255" key="4">
    <source>
        <dbReference type="PROSITE-ProRule" id="PRU01207"/>
    </source>
</evidence>
<evidence type="ECO:0000305" key="5"/>
<comment type="function">
    <text evidence="1">Binds specifically to GTP-Rho.</text>
</comment>
<comment type="subunit">
    <text evidence="1">Interacts with RhoA.</text>
</comment>
<comment type="subcellular location">
    <subcellularLocation>
        <location evidence="1">Cytoplasm</location>
        <location evidence="1">Perinuclear region</location>
    </subcellularLocation>
</comment>
<comment type="similarity">
    <text evidence="5">Belongs to the RHPN family.</text>
</comment>
<proteinExistence type="evidence at transcript level"/>
<gene>
    <name type="primary">rhpn2-a</name>
</gene>